<proteinExistence type="inferred from homology"/>
<feature type="chain" id="PRO_1000061141" description="Quinolinate synthase">
    <location>
        <begin position="1"/>
        <end position="347"/>
    </location>
</feature>
<feature type="binding site" evidence="1">
    <location>
        <position position="47"/>
    </location>
    <ligand>
        <name>iminosuccinate</name>
        <dbReference type="ChEBI" id="CHEBI:77875"/>
    </ligand>
</feature>
<feature type="binding site" evidence="1">
    <location>
        <position position="68"/>
    </location>
    <ligand>
        <name>iminosuccinate</name>
        <dbReference type="ChEBI" id="CHEBI:77875"/>
    </ligand>
</feature>
<feature type="binding site" evidence="1">
    <location>
        <position position="113"/>
    </location>
    <ligand>
        <name>[4Fe-4S] cluster</name>
        <dbReference type="ChEBI" id="CHEBI:49883"/>
    </ligand>
</feature>
<feature type="binding site" evidence="1">
    <location>
        <begin position="139"/>
        <end position="141"/>
    </location>
    <ligand>
        <name>iminosuccinate</name>
        <dbReference type="ChEBI" id="CHEBI:77875"/>
    </ligand>
</feature>
<feature type="binding site" evidence="1">
    <location>
        <position position="156"/>
    </location>
    <ligand>
        <name>iminosuccinate</name>
        <dbReference type="ChEBI" id="CHEBI:77875"/>
    </ligand>
</feature>
<feature type="binding site" evidence="1">
    <location>
        <position position="200"/>
    </location>
    <ligand>
        <name>[4Fe-4S] cluster</name>
        <dbReference type="ChEBI" id="CHEBI:49883"/>
    </ligand>
</feature>
<feature type="binding site" evidence="1">
    <location>
        <begin position="226"/>
        <end position="228"/>
    </location>
    <ligand>
        <name>iminosuccinate</name>
        <dbReference type="ChEBI" id="CHEBI:77875"/>
    </ligand>
</feature>
<feature type="binding site" evidence="1">
    <location>
        <position position="243"/>
    </location>
    <ligand>
        <name>iminosuccinate</name>
        <dbReference type="ChEBI" id="CHEBI:77875"/>
    </ligand>
</feature>
<feature type="binding site" evidence="1">
    <location>
        <position position="297"/>
    </location>
    <ligand>
        <name>[4Fe-4S] cluster</name>
        <dbReference type="ChEBI" id="CHEBI:49883"/>
    </ligand>
</feature>
<dbReference type="EC" id="2.5.1.72" evidence="1"/>
<dbReference type="EMBL" id="CP000800">
    <property type="protein sequence ID" value="ABV17763.1"/>
    <property type="molecule type" value="Genomic_DNA"/>
</dbReference>
<dbReference type="RefSeq" id="WP_000115295.1">
    <property type="nucleotide sequence ID" value="NC_009801.1"/>
</dbReference>
<dbReference type="SMR" id="A7ZJC5"/>
<dbReference type="GeneID" id="75204865"/>
<dbReference type="KEGG" id="ecw:EcE24377A_0777"/>
<dbReference type="HOGENOM" id="CLU_047382_1_0_6"/>
<dbReference type="UniPathway" id="UPA00253">
    <property type="reaction ID" value="UER00327"/>
</dbReference>
<dbReference type="Proteomes" id="UP000001122">
    <property type="component" value="Chromosome"/>
</dbReference>
<dbReference type="GO" id="GO:0005829">
    <property type="term" value="C:cytosol"/>
    <property type="evidence" value="ECO:0007669"/>
    <property type="project" value="TreeGrafter"/>
</dbReference>
<dbReference type="GO" id="GO:0051539">
    <property type="term" value="F:4 iron, 4 sulfur cluster binding"/>
    <property type="evidence" value="ECO:0007669"/>
    <property type="project" value="UniProtKB-KW"/>
</dbReference>
<dbReference type="GO" id="GO:0046872">
    <property type="term" value="F:metal ion binding"/>
    <property type="evidence" value="ECO:0007669"/>
    <property type="project" value="UniProtKB-KW"/>
</dbReference>
<dbReference type="GO" id="GO:0008987">
    <property type="term" value="F:quinolinate synthetase A activity"/>
    <property type="evidence" value="ECO:0007669"/>
    <property type="project" value="UniProtKB-UniRule"/>
</dbReference>
<dbReference type="GO" id="GO:0034628">
    <property type="term" value="P:'de novo' NAD biosynthetic process from L-aspartate"/>
    <property type="evidence" value="ECO:0007669"/>
    <property type="project" value="TreeGrafter"/>
</dbReference>
<dbReference type="FunFam" id="3.40.50.10800:FF:000001">
    <property type="entry name" value="Quinolinate synthase A"/>
    <property type="match status" value="1"/>
</dbReference>
<dbReference type="FunFam" id="3.40.50.10800:FF:000003">
    <property type="entry name" value="Quinolinate synthase A"/>
    <property type="match status" value="1"/>
</dbReference>
<dbReference type="Gene3D" id="3.40.50.10800">
    <property type="entry name" value="NadA-like"/>
    <property type="match status" value="3"/>
</dbReference>
<dbReference type="HAMAP" id="MF_00567">
    <property type="entry name" value="NadA_type1"/>
    <property type="match status" value="1"/>
</dbReference>
<dbReference type="InterPro" id="IPR003473">
    <property type="entry name" value="NadA"/>
</dbReference>
<dbReference type="InterPro" id="IPR036094">
    <property type="entry name" value="NadA_sf"/>
</dbReference>
<dbReference type="InterPro" id="IPR023513">
    <property type="entry name" value="Quinolinate_synth_A_type1"/>
</dbReference>
<dbReference type="NCBIfam" id="TIGR00550">
    <property type="entry name" value="nadA"/>
    <property type="match status" value="1"/>
</dbReference>
<dbReference type="NCBIfam" id="NF006877">
    <property type="entry name" value="PRK09375.1-1"/>
    <property type="match status" value="1"/>
</dbReference>
<dbReference type="NCBIfam" id="NF006878">
    <property type="entry name" value="PRK09375.1-2"/>
    <property type="match status" value="1"/>
</dbReference>
<dbReference type="PANTHER" id="PTHR30573:SF0">
    <property type="entry name" value="QUINOLINATE SYNTHASE, CHLOROPLASTIC"/>
    <property type="match status" value="1"/>
</dbReference>
<dbReference type="PANTHER" id="PTHR30573">
    <property type="entry name" value="QUINOLINATE SYNTHETASE A"/>
    <property type="match status" value="1"/>
</dbReference>
<dbReference type="Pfam" id="PF02445">
    <property type="entry name" value="NadA"/>
    <property type="match status" value="1"/>
</dbReference>
<dbReference type="SUPFAM" id="SSF142754">
    <property type="entry name" value="NadA-like"/>
    <property type="match status" value="1"/>
</dbReference>
<comment type="function">
    <text evidence="1">Catalyzes the condensation of iminoaspartate with dihydroxyacetone phosphate to form quinolinate.</text>
</comment>
<comment type="catalytic activity">
    <reaction evidence="1">
        <text>iminosuccinate + dihydroxyacetone phosphate = quinolinate + phosphate + 2 H2O + H(+)</text>
        <dbReference type="Rhea" id="RHEA:25888"/>
        <dbReference type="ChEBI" id="CHEBI:15377"/>
        <dbReference type="ChEBI" id="CHEBI:15378"/>
        <dbReference type="ChEBI" id="CHEBI:29959"/>
        <dbReference type="ChEBI" id="CHEBI:43474"/>
        <dbReference type="ChEBI" id="CHEBI:57642"/>
        <dbReference type="ChEBI" id="CHEBI:77875"/>
        <dbReference type="EC" id="2.5.1.72"/>
    </reaction>
    <physiologicalReaction direction="left-to-right" evidence="1">
        <dbReference type="Rhea" id="RHEA:25889"/>
    </physiologicalReaction>
</comment>
<comment type="cofactor">
    <cofactor evidence="1">
        <name>[4Fe-4S] cluster</name>
        <dbReference type="ChEBI" id="CHEBI:49883"/>
    </cofactor>
    <text evidence="1">Binds 1 [4Fe-4S] cluster per subunit.</text>
</comment>
<comment type="pathway">
    <text evidence="1">Cofactor biosynthesis; NAD(+) biosynthesis; quinolinate from iminoaspartate: step 1/1.</text>
</comment>
<comment type="subcellular location">
    <subcellularLocation>
        <location evidence="1">Cytoplasm</location>
    </subcellularLocation>
</comment>
<comment type="similarity">
    <text evidence="1">Belongs to the quinolinate synthase family. Type 1 subfamily.</text>
</comment>
<sequence>MSVMFDPDTAIYPFPPKPTPLSIDEKAYYREKIKRLLKERNAVMVAHYYTDPEIQQLAEETGGCISDSLEMARFGAKHPASTLLVAGVRFMGETAKILSPEKTILMPTLQAECSLDLGCPVEEFNAFCDAHPDRTVVVYANTSAAVKARADWVVTSSIAVELIDHLDSLGEKIIWAPDKHLGRYVQKQTGGDILCWQGACIVHDEFKTQALTRLQEEYPDAAILVHPESPQAIVDMADAVGSTSQLIAAAKTLPHQRLIVATDRGIFYKMQQAVPDKELLEAPTAGEGATCRSCAHCPWMAMNGLQSIAEALEQEGSNHEVHVDERLRERALVPLNRMLDFAATLRG</sequence>
<reference key="1">
    <citation type="journal article" date="2008" name="J. Bacteriol.">
        <title>The pangenome structure of Escherichia coli: comparative genomic analysis of E. coli commensal and pathogenic isolates.</title>
        <authorList>
            <person name="Rasko D.A."/>
            <person name="Rosovitz M.J."/>
            <person name="Myers G.S.A."/>
            <person name="Mongodin E.F."/>
            <person name="Fricke W.F."/>
            <person name="Gajer P."/>
            <person name="Crabtree J."/>
            <person name="Sebaihia M."/>
            <person name="Thomson N.R."/>
            <person name="Chaudhuri R."/>
            <person name="Henderson I.R."/>
            <person name="Sperandio V."/>
            <person name="Ravel J."/>
        </authorList>
    </citation>
    <scope>NUCLEOTIDE SEQUENCE [LARGE SCALE GENOMIC DNA]</scope>
    <source>
        <strain>E24377A / ETEC</strain>
    </source>
</reference>
<organism>
    <name type="scientific">Escherichia coli O139:H28 (strain E24377A / ETEC)</name>
    <dbReference type="NCBI Taxonomy" id="331111"/>
    <lineage>
        <taxon>Bacteria</taxon>
        <taxon>Pseudomonadati</taxon>
        <taxon>Pseudomonadota</taxon>
        <taxon>Gammaproteobacteria</taxon>
        <taxon>Enterobacterales</taxon>
        <taxon>Enterobacteriaceae</taxon>
        <taxon>Escherichia</taxon>
    </lineage>
</organism>
<protein>
    <recommendedName>
        <fullName evidence="1">Quinolinate synthase</fullName>
        <ecNumber evidence="1">2.5.1.72</ecNumber>
    </recommendedName>
</protein>
<evidence type="ECO:0000255" key="1">
    <source>
        <dbReference type="HAMAP-Rule" id="MF_00567"/>
    </source>
</evidence>
<keyword id="KW-0004">4Fe-4S</keyword>
<keyword id="KW-0963">Cytoplasm</keyword>
<keyword id="KW-0408">Iron</keyword>
<keyword id="KW-0411">Iron-sulfur</keyword>
<keyword id="KW-0479">Metal-binding</keyword>
<keyword id="KW-0662">Pyridine nucleotide biosynthesis</keyword>
<keyword id="KW-1185">Reference proteome</keyword>
<keyword id="KW-0808">Transferase</keyword>
<accession>A7ZJC5</accession>
<name>NADA_ECO24</name>
<gene>
    <name evidence="1" type="primary">nadA</name>
    <name type="ordered locus">EcE24377A_0777</name>
</gene>